<comment type="function">
    <text evidence="1">Specifically dimethylates two adjacent adenosines (A1518 and A1519) in the loop of a conserved hairpin near the 3'-end of 16S rRNA in the 30S particle. May play a critical role in biogenesis of 30S subunits.</text>
</comment>
<comment type="catalytic activity">
    <reaction evidence="1">
        <text>adenosine(1518)/adenosine(1519) in 16S rRNA + 4 S-adenosyl-L-methionine = N(6)-dimethyladenosine(1518)/N(6)-dimethyladenosine(1519) in 16S rRNA + 4 S-adenosyl-L-homocysteine + 4 H(+)</text>
        <dbReference type="Rhea" id="RHEA:19609"/>
        <dbReference type="Rhea" id="RHEA-COMP:10232"/>
        <dbReference type="Rhea" id="RHEA-COMP:10233"/>
        <dbReference type="ChEBI" id="CHEBI:15378"/>
        <dbReference type="ChEBI" id="CHEBI:57856"/>
        <dbReference type="ChEBI" id="CHEBI:59789"/>
        <dbReference type="ChEBI" id="CHEBI:74411"/>
        <dbReference type="ChEBI" id="CHEBI:74493"/>
        <dbReference type="EC" id="2.1.1.182"/>
    </reaction>
</comment>
<comment type="subcellular location">
    <subcellularLocation>
        <location evidence="1">Cytoplasm</location>
    </subcellularLocation>
</comment>
<comment type="similarity">
    <text evidence="1">Belongs to the class I-like SAM-binding methyltransferase superfamily. rRNA adenine N(6)-methyltransferase family. RsmA subfamily.</text>
</comment>
<evidence type="ECO:0000255" key="1">
    <source>
        <dbReference type="HAMAP-Rule" id="MF_00607"/>
    </source>
</evidence>
<reference key="1">
    <citation type="journal article" date="2004" name="Nat. Biotechnol.">
        <title>The genome sequence of the anaerobic, sulfate-reducing bacterium Desulfovibrio vulgaris Hildenborough.</title>
        <authorList>
            <person name="Heidelberg J.F."/>
            <person name="Seshadri R."/>
            <person name="Haveman S.A."/>
            <person name="Hemme C.L."/>
            <person name="Paulsen I.T."/>
            <person name="Kolonay J.F."/>
            <person name="Eisen J.A."/>
            <person name="Ward N.L."/>
            <person name="Methe B.A."/>
            <person name="Brinkac L.M."/>
            <person name="Daugherty S.C."/>
            <person name="DeBoy R.T."/>
            <person name="Dodson R.J."/>
            <person name="Durkin A.S."/>
            <person name="Madupu R."/>
            <person name="Nelson W.C."/>
            <person name="Sullivan S.A."/>
            <person name="Fouts D.E."/>
            <person name="Haft D.H."/>
            <person name="Selengut J."/>
            <person name="Peterson J.D."/>
            <person name="Davidsen T.M."/>
            <person name="Zafar N."/>
            <person name="Zhou L."/>
            <person name="Radune D."/>
            <person name="Dimitrov G."/>
            <person name="Hance M."/>
            <person name="Tran K."/>
            <person name="Khouri H.M."/>
            <person name="Gill J."/>
            <person name="Utterback T.R."/>
            <person name="Feldblyum T.V."/>
            <person name="Wall J.D."/>
            <person name="Voordouw G."/>
            <person name="Fraser C.M."/>
        </authorList>
    </citation>
    <scope>NUCLEOTIDE SEQUENCE [LARGE SCALE GENOMIC DNA]</scope>
    <source>
        <strain>ATCC 29579 / DSM 644 / CCUG 34227 / NCIMB 8303 / VKM B-1760 / Hildenborough</strain>
    </source>
</reference>
<accession>Q72B41</accession>
<protein>
    <recommendedName>
        <fullName evidence="1">Ribosomal RNA small subunit methyltransferase A</fullName>
        <ecNumber evidence="1">2.1.1.182</ecNumber>
    </recommendedName>
    <alternativeName>
        <fullName evidence="1">16S rRNA (adenine(1518)-N(6)/adenine(1519)-N(6))-dimethyltransferase</fullName>
    </alternativeName>
    <alternativeName>
        <fullName evidence="1">16S rRNA dimethyladenosine transferase</fullName>
    </alternativeName>
    <alternativeName>
        <fullName evidence="1">16S rRNA dimethylase</fullName>
    </alternativeName>
    <alternativeName>
        <fullName evidence="1">S-adenosylmethionine-6-N', N'-adenosyl(rRNA) dimethyltransferase</fullName>
    </alternativeName>
</protein>
<keyword id="KW-0963">Cytoplasm</keyword>
<keyword id="KW-0489">Methyltransferase</keyword>
<keyword id="KW-1185">Reference proteome</keyword>
<keyword id="KW-0694">RNA-binding</keyword>
<keyword id="KW-0698">rRNA processing</keyword>
<keyword id="KW-0949">S-adenosyl-L-methionine</keyword>
<keyword id="KW-0808">Transferase</keyword>
<name>RSMA_NITV2</name>
<sequence>MPPRAKKSLGQNFLKDRNIAARIAAQLHIGPDDWVIEIGPGPGALTRHIHAAGPARLFLLEKDHHWAREHRLHPLAGTPEAQVVLTDALLFPWERLDAAHPWKVIGNLPYNVASPLMWDICSRAPGLLRASFMIQKEVGERIVAAPGSRQYGALSVWLQCFTKPEWCFVVPPHVFTPRPKVDSAVLAFTPRTDRPDAVQSKRLARVLRLCFQQRRKQLQGILRPHVGGDASALLAGLGIDPAARPETLSPERFIALGEAVAMSAIA</sequence>
<proteinExistence type="inferred from homology"/>
<dbReference type="EC" id="2.1.1.182" evidence="1"/>
<dbReference type="EMBL" id="AE017285">
    <property type="protein sequence ID" value="AAS96274.1"/>
    <property type="molecule type" value="Genomic_DNA"/>
</dbReference>
<dbReference type="RefSeq" id="WP_041722933.1">
    <property type="nucleotide sequence ID" value="NC_002937.3"/>
</dbReference>
<dbReference type="SMR" id="Q72B41"/>
<dbReference type="STRING" id="882.DVU_1797"/>
<dbReference type="PaxDb" id="882-DVU_1797"/>
<dbReference type="EnsemblBacteria" id="AAS96274">
    <property type="protein sequence ID" value="AAS96274"/>
    <property type="gene ID" value="DVU_1797"/>
</dbReference>
<dbReference type="KEGG" id="dvu:DVU_1797"/>
<dbReference type="eggNOG" id="COG0030">
    <property type="taxonomic scope" value="Bacteria"/>
</dbReference>
<dbReference type="HOGENOM" id="CLU_041220_0_1_7"/>
<dbReference type="PhylomeDB" id="Q72B41"/>
<dbReference type="Proteomes" id="UP000002194">
    <property type="component" value="Chromosome"/>
</dbReference>
<dbReference type="GO" id="GO:0005829">
    <property type="term" value="C:cytosol"/>
    <property type="evidence" value="ECO:0007669"/>
    <property type="project" value="TreeGrafter"/>
</dbReference>
<dbReference type="GO" id="GO:0052908">
    <property type="term" value="F:16S rRNA (adenine(1518)-N(6)/adenine(1519)-N(6))-dimethyltransferase activity"/>
    <property type="evidence" value="ECO:0007669"/>
    <property type="project" value="UniProtKB-EC"/>
</dbReference>
<dbReference type="GO" id="GO:0003723">
    <property type="term" value="F:RNA binding"/>
    <property type="evidence" value="ECO:0007669"/>
    <property type="project" value="UniProtKB-KW"/>
</dbReference>
<dbReference type="Gene3D" id="1.10.8.100">
    <property type="entry name" value="Ribosomal RNA adenine dimethylase-like, domain 2"/>
    <property type="match status" value="1"/>
</dbReference>
<dbReference type="Gene3D" id="3.40.50.150">
    <property type="entry name" value="Vaccinia Virus protein VP39"/>
    <property type="match status" value="1"/>
</dbReference>
<dbReference type="HAMAP" id="MF_00607">
    <property type="entry name" value="16SrRNA_methyltr_A"/>
    <property type="match status" value="1"/>
</dbReference>
<dbReference type="InterPro" id="IPR001737">
    <property type="entry name" value="KsgA/Erm"/>
</dbReference>
<dbReference type="InterPro" id="IPR023165">
    <property type="entry name" value="rRNA_Ade_diMease-like_C"/>
</dbReference>
<dbReference type="InterPro" id="IPR020596">
    <property type="entry name" value="rRNA_Ade_Mease_Trfase_CS"/>
</dbReference>
<dbReference type="InterPro" id="IPR020598">
    <property type="entry name" value="rRNA_Ade_methylase_Trfase_N"/>
</dbReference>
<dbReference type="InterPro" id="IPR011530">
    <property type="entry name" value="rRNA_adenine_dimethylase"/>
</dbReference>
<dbReference type="InterPro" id="IPR029063">
    <property type="entry name" value="SAM-dependent_MTases_sf"/>
</dbReference>
<dbReference type="NCBIfam" id="TIGR00755">
    <property type="entry name" value="ksgA"/>
    <property type="match status" value="1"/>
</dbReference>
<dbReference type="PANTHER" id="PTHR11727">
    <property type="entry name" value="DIMETHYLADENOSINE TRANSFERASE"/>
    <property type="match status" value="1"/>
</dbReference>
<dbReference type="PANTHER" id="PTHR11727:SF7">
    <property type="entry name" value="DIMETHYLADENOSINE TRANSFERASE-RELATED"/>
    <property type="match status" value="1"/>
</dbReference>
<dbReference type="Pfam" id="PF00398">
    <property type="entry name" value="RrnaAD"/>
    <property type="match status" value="1"/>
</dbReference>
<dbReference type="SMART" id="SM00650">
    <property type="entry name" value="rADc"/>
    <property type="match status" value="1"/>
</dbReference>
<dbReference type="SUPFAM" id="SSF53335">
    <property type="entry name" value="S-adenosyl-L-methionine-dependent methyltransferases"/>
    <property type="match status" value="1"/>
</dbReference>
<dbReference type="PROSITE" id="PS01131">
    <property type="entry name" value="RRNA_A_DIMETH"/>
    <property type="match status" value="1"/>
</dbReference>
<dbReference type="PROSITE" id="PS51689">
    <property type="entry name" value="SAM_RNA_A_N6_MT"/>
    <property type="match status" value="1"/>
</dbReference>
<gene>
    <name evidence="1" type="primary">rsmA</name>
    <name evidence="1" type="synonym">ksgA</name>
    <name type="ordered locus">DVU_1797</name>
</gene>
<feature type="chain" id="PRO_0000101523" description="Ribosomal RNA small subunit methyltransferase A">
    <location>
        <begin position="1"/>
        <end position="266"/>
    </location>
</feature>
<feature type="binding site" evidence="1">
    <location>
        <position position="12"/>
    </location>
    <ligand>
        <name>S-adenosyl-L-methionine</name>
        <dbReference type="ChEBI" id="CHEBI:59789"/>
    </ligand>
</feature>
<feature type="binding site" evidence="1">
    <location>
        <position position="14"/>
    </location>
    <ligand>
        <name>S-adenosyl-L-methionine</name>
        <dbReference type="ChEBI" id="CHEBI:59789"/>
    </ligand>
</feature>
<feature type="binding site" evidence="1">
    <location>
        <position position="39"/>
    </location>
    <ligand>
        <name>S-adenosyl-L-methionine</name>
        <dbReference type="ChEBI" id="CHEBI:59789"/>
    </ligand>
</feature>
<feature type="binding site" evidence="1">
    <location>
        <position position="61"/>
    </location>
    <ligand>
        <name>S-adenosyl-L-methionine</name>
        <dbReference type="ChEBI" id="CHEBI:59789"/>
    </ligand>
</feature>
<feature type="binding site" evidence="1">
    <location>
        <position position="87"/>
    </location>
    <ligand>
        <name>S-adenosyl-L-methionine</name>
        <dbReference type="ChEBI" id="CHEBI:59789"/>
    </ligand>
</feature>
<feature type="binding site" evidence="1">
    <location>
        <position position="107"/>
    </location>
    <ligand>
        <name>S-adenosyl-L-methionine</name>
        <dbReference type="ChEBI" id="CHEBI:59789"/>
    </ligand>
</feature>
<organism>
    <name type="scientific">Nitratidesulfovibrio vulgaris (strain ATCC 29579 / DSM 644 / CCUG 34227 / NCIMB 8303 / VKM B-1760 / Hildenborough)</name>
    <name type="common">Desulfovibrio vulgaris</name>
    <dbReference type="NCBI Taxonomy" id="882"/>
    <lineage>
        <taxon>Bacteria</taxon>
        <taxon>Pseudomonadati</taxon>
        <taxon>Thermodesulfobacteriota</taxon>
        <taxon>Desulfovibrionia</taxon>
        <taxon>Desulfovibrionales</taxon>
        <taxon>Desulfovibrionaceae</taxon>
        <taxon>Nitratidesulfovibrio</taxon>
    </lineage>
</organism>